<evidence type="ECO:0000250" key="1"/>
<evidence type="ECO:0000255" key="2">
    <source>
        <dbReference type="HAMAP-Rule" id="MF_00047"/>
    </source>
</evidence>
<evidence type="ECO:0000305" key="3"/>
<keyword id="KW-0067">ATP-binding</keyword>
<keyword id="KW-0133">Cell shape</keyword>
<keyword id="KW-0961">Cell wall biogenesis/degradation</keyword>
<keyword id="KW-0963">Cytoplasm</keyword>
<keyword id="KW-0436">Ligase</keyword>
<keyword id="KW-0460">Magnesium</keyword>
<keyword id="KW-0464">Manganese</keyword>
<keyword id="KW-0479">Metal-binding</keyword>
<keyword id="KW-0547">Nucleotide-binding</keyword>
<keyword id="KW-0573">Peptidoglycan synthesis</keyword>
<proteinExistence type="inferred from homology"/>
<protein>
    <recommendedName>
        <fullName evidence="2">D-alanine--D-alanine ligase</fullName>
        <ecNumber evidence="2">6.3.2.4</ecNumber>
    </recommendedName>
    <alternativeName>
        <fullName evidence="2">D-Ala-D-Ala ligase</fullName>
    </alternativeName>
    <alternativeName>
        <fullName evidence="2">D-alanylalanine synthetase</fullName>
    </alternativeName>
</protein>
<feature type="chain" id="PRO_0000341124" description="D-alanine--D-alanine ligase">
    <location>
        <begin position="1"/>
        <end position="349"/>
    </location>
</feature>
<feature type="domain" description="ATP-grasp" evidence="2">
    <location>
        <begin position="132"/>
        <end position="335"/>
    </location>
</feature>
<feature type="binding site" evidence="2">
    <location>
        <begin position="162"/>
        <end position="217"/>
    </location>
    <ligand>
        <name>ATP</name>
        <dbReference type="ChEBI" id="CHEBI:30616"/>
    </ligand>
</feature>
<feature type="binding site" evidence="2">
    <location>
        <position position="289"/>
    </location>
    <ligand>
        <name>Mg(2+)</name>
        <dbReference type="ChEBI" id="CHEBI:18420"/>
        <label>1</label>
    </ligand>
</feature>
<feature type="binding site" evidence="2">
    <location>
        <position position="302"/>
    </location>
    <ligand>
        <name>Mg(2+)</name>
        <dbReference type="ChEBI" id="CHEBI:18420"/>
        <label>1</label>
    </ligand>
</feature>
<feature type="binding site" evidence="2">
    <location>
        <position position="302"/>
    </location>
    <ligand>
        <name>Mg(2+)</name>
        <dbReference type="ChEBI" id="CHEBI:18420"/>
        <label>2</label>
    </ligand>
</feature>
<feature type="binding site" evidence="2">
    <location>
        <position position="304"/>
    </location>
    <ligand>
        <name>Mg(2+)</name>
        <dbReference type="ChEBI" id="CHEBI:18420"/>
        <label>2</label>
    </ligand>
</feature>
<comment type="function">
    <text evidence="2">Cell wall formation.</text>
</comment>
<comment type="catalytic activity">
    <reaction evidence="2">
        <text>2 D-alanine + ATP = D-alanyl-D-alanine + ADP + phosphate + H(+)</text>
        <dbReference type="Rhea" id="RHEA:11224"/>
        <dbReference type="ChEBI" id="CHEBI:15378"/>
        <dbReference type="ChEBI" id="CHEBI:30616"/>
        <dbReference type="ChEBI" id="CHEBI:43474"/>
        <dbReference type="ChEBI" id="CHEBI:57416"/>
        <dbReference type="ChEBI" id="CHEBI:57822"/>
        <dbReference type="ChEBI" id="CHEBI:456216"/>
        <dbReference type="EC" id="6.3.2.4"/>
    </reaction>
</comment>
<comment type="cofactor">
    <cofactor evidence="1">
        <name>Mg(2+)</name>
        <dbReference type="ChEBI" id="CHEBI:18420"/>
    </cofactor>
    <cofactor evidence="1">
        <name>Mn(2+)</name>
        <dbReference type="ChEBI" id="CHEBI:29035"/>
    </cofactor>
    <text evidence="1">Binds 2 magnesium or manganese ions per subunit.</text>
</comment>
<comment type="pathway">
    <text evidence="2">Cell wall biogenesis; peptidoglycan biosynthesis.</text>
</comment>
<comment type="subcellular location">
    <subcellularLocation>
        <location evidence="2">Cytoplasm</location>
    </subcellularLocation>
</comment>
<comment type="similarity">
    <text evidence="2">Belongs to the D-alanine--D-alanine ligase family.</text>
</comment>
<comment type="sequence caution" evidence="3">
    <conflict type="erroneous initiation">
        <sequence resource="EMBL-CDS" id="ABJ71994"/>
    </conflict>
</comment>
<sequence>MSKETLILLYGGRSAEREVSVLSAESVMRAVNYSRFIVKTYFITKGGEFIKTQEFTDTPAEEEKLLTNDLAESYPKISPAAIYEKDAVVFPVLHGPMGEDGSIQGFLEILRLAYVGPNILSASSTMDKLLAKHVFEAVGVPQVPYVAAFADENQAEIAQEVVEKLEFPVFVKPANMGSSVGISKVDDLADLQPALSEAYKYDNRVVIEQGVDAREIECAVLGNNSDVSATLPGEVVKDVGFYDYNSKYIDNKIQMDIPAKVSADLAQKIQEYAKKAYKAVNGAGLSRCDFFVTKDGNVYLNEVNAIPGFTQWSMYPLLWENMGLSYSDLIEKLVDLAKETFETRENHLL</sequence>
<dbReference type="EC" id="6.3.2.4" evidence="2"/>
<dbReference type="EMBL" id="CP000425">
    <property type="protein sequence ID" value="ABJ71994.1"/>
    <property type="status" value="ALT_INIT"/>
    <property type="molecule type" value="Genomic_DNA"/>
</dbReference>
<dbReference type="RefSeq" id="WP_031287792.1">
    <property type="nucleotide sequence ID" value="NC_008527.1"/>
</dbReference>
<dbReference type="SMR" id="Q031X8"/>
<dbReference type="KEGG" id="llc:LACR_0387"/>
<dbReference type="HOGENOM" id="CLU_039268_0_0_9"/>
<dbReference type="UniPathway" id="UPA00219"/>
<dbReference type="Proteomes" id="UP000000240">
    <property type="component" value="Chromosome"/>
</dbReference>
<dbReference type="GO" id="GO:0005829">
    <property type="term" value="C:cytosol"/>
    <property type="evidence" value="ECO:0007669"/>
    <property type="project" value="TreeGrafter"/>
</dbReference>
<dbReference type="GO" id="GO:0005524">
    <property type="term" value="F:ATP binding"/>
    <property type="evidence" value="ECO:0007669"/>
    <property type="project" value="UniProtKB-KW"/>
</dbReference>
<dbReference type="GO" id="GO:0008716">
    <property type="term" value="F:D-alanine-D-alanine ligase activity"/>
    <property type="evidence" value="ECO:0007669"/>
    <property type="project" value="UniProtKB-UniRule"/>
</dbReference>
<dbReference type="GO" id="GO:0046872">
    <property type="term" value="F:metal ion binding"/>
    <property type="evidence" value="ECO:0007669"/>
    <property type="project" value="UniProtKB-KW"/>
</dbReference>
<dbReference type="GO" id="GO:0071555">
    <property type="term" value="P:cell wall organization"/>
    <property type="evidence" value="ECO:0007669"/>
    <property type="project" value="UniProtKB-KW"/>
</dbReference>
<dbReference type="GO" id="GO:0009252">
    <property type="term" value="P:peptidoglycan biosynthetic process"/>
    <property type="evidence" value="ECO:0007669"/>
    <property type="project" value="UniProtKB-UniRule"/>
</dbReference>
<dbReference type="GO" id="GO:0008360">
    <property type="term" value="P:regulation of cell shape"/>
    <property type="evidence" value="ECO:0007669"/>
    <property type="project" value="UniProtKB-KW"/>
</dbReference>
<dbReference type="FunFam" id="3.30.1490.20:FF:000007">
    <property type="entry name" value="D-alanine--D-alanine ligase"/>
    <property type="match status" value="1"/>
</dbReference>
<dbReference type="FunFam" id="3.30.470.20:FF:000008">
    <property type="entry name" value="D-alanine--D-alanine ligase"/>
    <property type="match status" value="1"/>
</dbReference>
<dbReference type="Gene3D" id="3.40.50.20">
    <property type="match status" value="1"/>
</dbReference>
<dbReference type="Gene3D" id="3.30.1490.20">
    <property type="entry name" value="ATP-grasp fold, A domain"/>
    <property type="match status" value="1"/>
</dbReference>
<dbReference type="Gene3D" id="3.30.470.20">
    <property type="entry name" value="ATP-grasp fold, B domain"/>
    <property type="match status" value="1"/>
</dbReference>
<dbReference type="HAMAP" id="MF_00047">
    <property type="entry name" value="Dala_Dala_lig"/>
    <property type="match status" value="1"/>
</dbReference>
<dbReference type="InterPro" id="IPR011761">
    <property type="entry name" value="ATP-grasp"/>
</dbReference>
<dbReference type="InterPro" id="IPR013815">
    <property type="entry name" value="ATP_grasp_subdomain_1"/>
</dbReference>
<dbReference type="InterPro" id="IPR000291">
    <property type="entry name" value="D-Ala_lig_Van_CS"/>
</dbReference>
<dbReference type="InterPro" id="IPR005905">
    <property type="entry name" value="D_ala_D_ala"/>
</dbReference>
<dbReference type="InterPro" id="IPR011095">
    <property type="entry name" value="Dala_Dala_lig_C"/>
</dbReference>
<dbReference type="InterPro" id="IPR011127">
    <property type="entry name" value="Dala_Dala_lig_N"/>
</dbReference>
<dbReference type="InterPro" id="IPR016185">
    <property type="entry name" value="PreATP-grasp_dom_sf"/>
</dbReference>
<dbReference type="NCBIfam" id="TIGR01205">
    <property type="entry name" value="D_ala_D_alaTIGR"/>
    <property type="match status" value="1"/>
</dbReference>
<dbReference type="NCBIfam" id="NF002528">
    <property type="entry name" value="PRK01966.1-4"/>
    <property type="match status" value="1"/>
</dbReference>
<dbReference type="NCBIfam" id="NF002529">
    <property type="entry name" value="PRK01966.1-5"/>
    <property type="match status" value="1"/>
</dbReference>
<dbReference type="PANTHER" id="PTHR23132">
    <property type="entry name" value="D-ALANINE--D-ALANINE LIGASE"/>
    <property type="match status" value="1"/>
</dbReference>
<dbReference type="PANTHER" id="PTHR23132:SF25">
    <property type="entry name" value="D-ALANINE--D-ALANINE LIGASE A"/>
    <property type="match status" value="1"/>
</dbReference>
<dbReference type="Pfam" id="PF07478">
    <property type="entry name" value="Dala_Dala_lig_C"/>
    <property type="match status" value="1"/>
</dbReference>
<dbReference type="Pfam" id="PF01820">
    <property type="entry name" value="Dala_Dala_lig_N"/>
    <property type="match status" value="1"/>
</dbReference>
<dbReference type="PIRSF" id="PIRSF039102">
    <property type="entry name" value="Ddl/VanB"/>
    <property type="match status" value="1"/>
</dbReference>
<dbReference type="SUPFAM" id="SSF56059">
    <property type="entry name" value="Glutathione synthetase ATP-binding domain-like"/>
    <property type="match status" value="1"/>
</dbReference>
<dbReference type="SUPFAM" id="SSF52440">
    <property type="entry name" value="PreATP-grasp domain"/>
    <property type="match status" value="1"/>
</dbReference>
<dbReference type="PROSITE" id="PS50975">
    <property type="entry name" value="ATP_GRASP"/>
    <property type="match status" value="1"/>
</dbReference>
<dbReference type="PROSITE" id="PS00843">
    <property type="entry name" value="DALA_DALA_LIGASE_1"/>
    <property type="match status" value="1"/>
</dbReference>
<dbReference type="PROSITE" id="PS00844">
    <property type="entry name" value="DALA_DALA_LIGASE_2"/>
    <property type="match status" value="1"/>
</dbReference>
<reference key="1">
    <citation type="journal article" date="2006" name="Proc. Natl. Acad. Sci. U.S.A.">
        <title>Comparative genomics of the lactic acid bacteria.</title>
        <authorList>
            <person name="Makarova K.S."/>
            <person name="Slesarev A."/>
            <person name="Wolf Y.I."/>
            <person name="Sorokin A."/>
            <person name="Mirkin B."/>
            <person name="Koonin E.V."/>
            <person name="Pavlov A."/>
            <person name="Pavlova N."/>
            <person name="Karamychev V."/>
            <person name="Polouchine N."/>
            <person name="Shakhova V."/>
            <person name="Grigoriev I."/>
            <person name="Lou Y."/>
            <person name="Rohksar D."/>
            <person name="Lucas S."/>
            <person name="Huang K."/>
            <person name="Goodstein D.M."/>
            <person name="Hawkins T."/>
            <person name="Plengvidhya V."/>
            <person name="Welker D."/>
            <person name="Hughes J."/>
            <person name="Goh Y."/>
            <person name="Benson A."/>
            <person name="Baldwin K."/>
            <person name="Lee J.-H."/>
            <person name="Diaz-Muniz I."/>
            <person name="Dosti B."/>
            <person name="Smeianov V."/>
            <person name="Wechter W."/>
            <person name="Barabote R."/>
            <person name="Lorca G."/>
            <person name="Altermann E."/>
            <person name="Barrangou R."/>
            <person name="Ganesan B."/>
            <person name="Xie Y."/>
            <person name="Rawsthorne H."/>
            <person name="Tamir D."/>
            <person name="Parker C."/>
            <person name="Breidt F."/>
            <person name="Broadbent J.R."/>
            <person name="Hutkins R."/>
            <person name="O'Sullivan D."/>
            <person name="Steele J."/>
            <person name="Unlu G."/>
            <person name="Saier M.H. Jr."/>
            <person name="Klaenhammer T."/>
            <person name="Richardson P."/>
            <person name="Kozyavkin S."/>
            <person name="Weimer B.C."/>
            <person name="Mills D.A."/>
        </authorList>
    </citation>
    <scope>NUCLEOTIDE SEQUENCE [LARGE SCALE GENOMIC DNA]</scope>
    <source>
        <strain>SK11</strain>
    </source>
</reference>
<organism>
    <name type="scientific">Lactococcus lactis subsp. cremoris (strain SK11)</name>
    <dbReference type="NCBI Taxonomy" id="272622"/>
    <lineage>
        <taxon>Bacteria</taxon>
        <taxon>Bacillati</taxon>
        <taxon>Bacillota</taxon>
        <taxon>Bacilli</taxon>
        <taxon>Lactobacillales</taxon>
        <taxon>Streptococcaceae</taxon>
        <taxon>Lactococcus</taxon>
        <taxon>Lactococcus cremoris subsp. cremoris</taxon>
    </lineage>
</organism>
<name>DDL_LACLS</name>
<accession>Q031X8</accession>
<gene>
    <name evidence="2" type="primary">ddl</name>
    <name type="ordered locus">LACR_0387</name>
</gene>